<organism>
    <name type="scientific">Ruegeria pomeroyi (strain ATCC 700808 / DSM 15171 / DSS-3)</name>
    <name type="common">Silicibacter pomeroyi</name>
    <dbReference type="NCBI Taxonomy" id="246200"/>
    <lineage>
        <taxon>Bacteria</taxon>
        <taxon>Pseudomonadati</taxon>
        <taxon>Pseudomonadota</taxon>
        <taxon>Alphaproteobacteria</taxon>
        <taxon>Rhodobacterales</taxon>
        <taxon>Roseobacteraceae</taxon>
        <taxon>Ruegeria</taxon>
    </lineage>
</organism>
<accession>Q5LNK3</accession>
<reference key="1">
    <citation type="journal article" date="2004" name="Nature">
        <title>Genome sequence of Silicibacter pomeroyi reveals adaptations to the marine environment.</title>
        <authorList>
            <person name="Moran M.A."/>
            <person name="Buchan A."/>
            <person name="Gonzalez J.M."/>
            <person name="Heidelberg J.F."/>
            <person name="Whitman W.B."/>
            <person name="Kiene R.P."/>
            <person name="Henriksen J.R."/>
            <person name="King G.M."/>
            <person name="Belas R."/>
            <person name="Fuqua C."/>
            <person name="Brinkac L.M."/>
            <person name="Lewis M."/>
            <person name="Johri S."/>
            <person name="Weaver B."/>
            <person name="Pai G."/>
            <person name="Eisen J.A."/>
            <person name="Rahe E."/>
            <person name="Sheldon W.M."/>
            <person name="Ye W."/>
            <person name="Miller T.R."/>
            <person name="Carlton J."/>
            <person name="Rasko D.A."/>
            <person name="Paulsen I.T."/>
            <person name="Ren Q."/>
            <person name="Daugherty S.C."/>
            <person name="DeBoy R.T."/>
            <person name="Dodson R.J."/>
            <person name="Durkin A.S."/>
            <person name="Madupu R."/>
            <person name="Nelson W.C."/>
            <person name="Sullivan S.A."/>
            <person name="Rosovitz M.J."/>
            <person name="Haft D.H."/>
            <person name="Selengut J."/>
            <person name="Ward N."/>
        </authorList>
    </citation>
    <scope>NUCLEOTIDE SEQUENCE [LARGE SCALE GENOMIC DNA]</scope>
    <source>
        <strain>ATCC 700808 / DSM 15171 / DSS-3</strain>
    </source>
</reference>
<reference key="2">
    <citation type="journal article" date="2014" name="Stand. Genomic Sci.">
        <title>An updated genome annotation for the model marine bacterium Ruegeria pomeroyi DSS-3.</title>
        <authorList>
            <person name="Rivers A.R."/>
            <person name="Smith C.B."/>
            <person name="Moran M.A."/>
        </authorList>
    </citation>
    <scope>GENOME REANNOTATION</scope>
    <source>
        <strain>ATCC 700808 / DSM 15171 / DSS-3</strain>
    </source>
</reference>
<gene>
    <name evidence="1" type="primary">acpS</name>
    <name type="ordered locus">SPO3200</name>
</gene>
<evidence type="ECO:0000255" key="1">
    <source>
        <dbReference type="HAMAP-Rule" id="MF_00101"/>
    </source>
</evidence>
<protein>
    <recommendedName>
        <fullName evidence="1">Holo-[acyl-carrier-protein] synthase</fullName>
        <shortName evidence="1">Holo-ACP synthase</shortName>
        <ecNumber evidence="1">2.7.8.7</ecNumber>
    </recommendedName>
    <alternativeName>
        <fullName evidence="1">4'-phosphopantetheinyl transferase AcpS</fullName>
    </alternativeName>
</protein>
<proteinExistence type="inferred from homology"/>
<comment type="function">
    <text evidence="1">Transfers the 4'-phosphopantetheine moiety from coenzyme A to a Ser of acyl-carrier-protein.</text>
</comment>
<comment type="catalytic activity">
    <reaction evidence="1">
        <text>apo-[ACP] + CoA = holo-[ACP] + adenosine 3',5'-bisphosphate + H(+)</text>
        <dbReference type="Rhea" id="RHEA:12068"/>
        <dbReference type="Rhea" id="RHEA-COMP:9685"/>
        <dbReference type="Rhea" id="RHEA-COMP:9690"/>
        <dbReference type="ChEBI" id="CHEBI:15378"/>
        <dbReference type="ChEBI" id="CHEBI:29999"/>
        <dbReference type="ChEBI" id="CHEBI:57287"/>
        <dbReference type="ChEBI" id="CHEBI:58343"/>
        <dbReference type="ChEBI" id="CHEBI:64479"/>
        <dbReference type="EC" id="2.7.8.7"/>
    </reaction>
</comment>
<comment type="cofactor">
    <cofactor evidence="1">
        <name>Mg(2+)</name>
        <dbReference type="ChEBI" id="CHEBI:18420"/>
    </cofactor>
</comment>
<comment type="subcellular location">
    <subcellularLocation>
        <location evidence="1">Cytoplasm</location>
    </subcellularLocation>
</comment>
<comment type="similarity">
    <text evidence="1">Belongs to the P-Pant transferase superfamily. AcpS family.</text>
</comment>
<sequence>MILGIGTDLANIERIERTLDRFGDRFRNRVFTEIEQRKAERRSDTAGTYAKRWAAKEACSKALGTGLRMGISWKDMAVSNLRSGQPVMQVTGWAAERLREMTPEGYEAIIHVTLTDDHPWAQAFVVIEARPLAEVGEVNLTYPAPPRM</sequence>
<feature type="chain" id="PRO_0000228306" description="Holo-[acyl-carrier-protein] synthase">
    <location>
        <begin position="1"/>
        <end position="148"/>
    </location>
</feature>
<feature type="binding site" evidence="1">
    <location>
        <position position="8"/>
    </location>
    <ligand>
        <name>Mg(2+)</name>
        <dbReference type="ChEBI" id="CHEBI:18420"/>
    </ligand>
</feature>
<feature type="binding site" evidence="1">
    <location>
        <position position="57"/>
    </location>
    <ligand>
        <name>Mg(2+)</name>
        <dbReference type="ChEBI" id="CHEBI:18420"/>
    </ligand>
</feature>
<dbReference type="EC" id="2.7.8.7" evidence="1"/>
<dbReference type="EMBL" id="CP000031">
    <property type="protein sequence ID" value="AAV96435.1"/>
    <property type="molecule type" value="Genomic_DNA"/>
</dbReference>
<dbReference type="RefSeq" id="WP_011048890.1">
    <property type="nucleotide sequence ID" value="NC_003911.12"/>
</dbReference>
<dbReference type="SMR" id="Q5LNK3"/>
<dbReference type="STRING" id="246200.SPO3200"/>
<dbReference type="PaxDb" id="246200-SPO3200"/>
<dbReference type="KEGG" id="sil:SPO3200"/>
<dbReference type="eggNOG" id="COG0736">
    <property type="taxonomic scope" value="Bacteria"/>
</dbReference>
<dbReference type="HOGENOM" id="CLU_089696_0_2_5"/>
<dbReference type="OrthoDB" id="517356at2"/>
<dbReference type="Proteomes" id="UP000001023">
    <property type="component" value="Chromosome"/>
</dbReference>
<dbReference type="GO" id="GO:0005737">
    <property type="term" value="C:cytoplasm"/>
    <property type="evidence" value="ECO:0007669"/>
    <property type="project" value="UniProtKB-SubCell"/>
</dbReference>
<dbReference type="GO" id="GO:0008897">
    <property type="term" value="F:holo-[acyl-carrier-protein] synthase activity"/>
    <property type="evidence" value="ECO:0007669"/>
    <property type="project" value="UniProtKB-UniRule"/>
</dbReference>
<dbReference type="GO" id="GO:0000287">
    <property type="term" value="F:magnesium ion binding"/>
    <property type="evidence" value="ECO:0007669"/>
    <property type="project" value="UniProtKB-UniRule"/>
</dbReference>
<dbReference type="GO" id="GO:0006633">
    <property type="term" value="P:fatty acid biosynthetic process"/>
    <property type="evidence" value="ECO:0007669"/>
    <property type="project" value="UniProtKB-UniRule"/>
</dbReference>
<dbReference type="Gene3D" id="3.90.470.20">
    <property type="entry name" value="4'-phosphopantetheinyl transferase domain"/>
    <property type="match status" value="1"/>
</dbReference>
<dbReference type="HAMAP" id="MF_00101">
    <property type="entry name" value="AcpS"/>
    <property type="match status" value="1"/>
</dbReference>
<dbReference type="InterPro" id="IPR008278">
    <property type="entry name" value="4-PPantetheinyl_Trfase_dom"/>
</dbReference>
<dbReference type="InterPro" id="IPR037143">
    <property type="entry name" value="4-PPantetheinyl_Trfase_dom_sf"/>
</dbReference>
<dbReference type="InterPro" id="IPR002582">
    <property type="entry name" value="ACPS"/>
</dbReference>
<dbReference type="InterPro" id="IPR004568">
    <property type="entry name" value="Ppantetheine-prot_Trfase_dom"/>
</dbReference>
<dbReference type="NCBIfam" id="TIGR00516">
    <property type="entry name" value="acpS"/>
    <property type="match status" value="1"/>
</dbReference>
<dbReference type="NCBIfam" id="TIGR00556">
    <property type="entry name" value="pantethn_trn"/>
    <property type="match status" value="1"/>
</dbReference>
<dbReference type="Pfam" id="PF01648">
    <property type="entry name" value="ACPS"/>
    <property type="match status" value="1"/>
</dbReference>
<dbReference type="SUPFAM" id="SSF56214">
    <property type="entry name" value="4'-phosphopantetheinyl transferase"/>
    <property type="match status" value="1"/>
</dbReference>
<keyword id="KW-0963">Cytoplasm</keyword>
<keyword id="KW-0275">Fatty acid biosynthesis</keyword>
<keyword id="KW-0276">Fatty acid metabolism</keyword>
<keyword id="KW-0444">Lipid biosynthesis</keyword>
<keyword id="KW-0443">Lipid metabolism</keyword>
<keyword id="KW-0460">Magnesium</keyword>
<keyword id="KW-0479">Metal-binding</keyword>
<keyword id="KW-1185">Reference proteome</keyword>
<keyword id="KW-0808">Transferase</keyword>
<name>ACPS_RUEPO</name>